<keyword id="KW-0256">Endoplasmic reticulum</keyword>
<keyword id="KW-0460">Magnesium</keyword>
<keyword id="KW-0472">Membrane</keyword>
<keyword id="KW-0808">Transferase</keyword>
<keyword id="KW-0812">Transmembrane</keyword>
<keyword id="KW-1133">Transmembrane helix</keyword>
<name>PGT2_LITER</name>
<dbReference type="EC" id="2.5.1.93"/>
<dbReference type="EMBL" id="AB055079">
    <property type="protein sequence ID" value="BAB84123.1"/>
    <property type="molecule type" value="mRNA"/>
</dbReference>
<dbReference type="SMR" id="Q8W404"/>
<dbReference type="KEGG" id="ag:BAB84123"/>
<dbReference type="OrthoDB" id="18170at2759"/>
<dbReference type="BRENDA" id="2.5.1.93">
    <property type="organism ID" value="3048"/>
</dbReference>
<dbReference type="SABIO-RK" id="Q8W404"/>
<dbReference type="GO" id="GO:0005789">
    <property type="term" value="C:endoplasmic reticulum membrane"/>
    <property type="evidence" value="ECO:0007669"/>
    <property type="project" value="UniProtKB-SubCell"/>
</dbReference>
<dbReference type="GO" id="GO:0005743">
    <property type="term" value="C:mitochondrial inner membrane"/>
    <property type="evidence" value="ECO:0007669"/>
    <property type="project" value="UniProtKB-UniRule"/>
</dbReference>
<dbReference type="GO" id="GO:0102930">
    <property type="term" value="F:4-hydroxybenzoate geranyltransferase activity"/>
    <property type="evidence" value="ECO:0007669"/>
    <property type="project" value="UniProtKB-EC"/>
</dbReference>
<dbReference type="GO" id="GO:0004659">
    <property type="term" value="F:prenyltransferase activity"/>
    <property type="evidence" value="ECO:0007669"/>
    <property type="project" value="InterPro"/>
</dbReference>
<dbReference type="GO" id="GO:0008299">
    <property type="term" value="P:isoprenoid biosynthetic process"/>
    <property type="evidence" value="ECO:0007669"/>
    <property type="project" value="UniProtKB-UniRule"/>
</dbReference>
<dbReference type="GO" id="GO:0006744">
    <property type="term" value="P:ubiquinone biosynthetic process"/>
    <property type="evidence" value="ECO:0007669"/>
    <property type="project" value="UniProtKB-UniRule"/>
</dbReference>
<dbReference type="CDD" id="cd13959">
    <property type="entry name" value="PT_UbiA_COQ2"/>
    <property type="match status" value="1"/>
</dbReference>
<dbReference type="FunFam" id="1.20.120.1780:FF:000001">
    <property type="entry name" value="4-hydroxybenzoate octaprenyltransferase"/>
    <property type="match status" value="1"/>
</dbReference>
<dbReference type="FunFam" id="1.10.357.140:FF:000003">
    <property type="entry name" value="4-hydroxybenzoate polyprenyltransferase, mitochondrial"/>
    <property type="match status" value="1"/>
</dbReference>
<dbReference type="Gene3D" id="1.10.357.140">
    <property type="entry name" value="UbiA prenyltransferase"/>
    <property type="match status" value="1"/>
</dbReference>
<dbReference type="Gene3D" id="1.20.120.1780">
    <property type="entry name" value="UbiA prenyltransferase"/>
    <property type="match status" value="1"/>
</dbReference>
<dbReference type="HAMAP" id="MF_01635">
    <property type="entry name" value="UbiA"/>
    <property type="match status" value="1"/>
</dbReference>
<dbReference type="InterPro" id="IPR006370">
    <property type="entry name" value="HB_polyprenyltransferase-like"/>
</dbReference>
<dbReference type="InterPro" id="IPR039653">
    <property type="entry name" value="Prenyltransferase"/>
</dbReference>
<dbReference type="InterPro" id="IPR000537">
    <property type="entry name" value="UbiA_prenyltransferase"/>
</dbReference>
<dbReference type="InterPro" id="IPR030470">
    <property type="entry name" value="UbiA_prenylTrfase_CS"/>
</dbReference>
<dbReference type="InterPro" id="IPR044878">
    <property type="entry name" value="UbiA_sf"/>
</dbReference>
<dbReference type="NCBIfam" id="TIGR01474">
    <property type="entry name" value="ubiA_proteo"/>
    <property type="match status" value="1"/>
</dbReference>
<dbReference type="PANTHER" id="PTHR11048:SF28">
    <property type="entry name" value="4-HYDROXYBENZOATE POLYPRENYLTRANSFERASE, MITOCHONDRIAL"/>
    <property type="match status" value="1"/>
</dbReference>
<dbReference type="PANTHER" id="PTHR11048">
    <property type="entry name" value="PRENYLTRANSFERASES"/>
    <property type="match status" value="1"/>
</dbReference>
<dbReference type="Pfam" id="PF01040">
    <property type="entry name" value="UbiA"/>
    <property type="match status" value="1"/>
</dbReference>
<dbReference type="PROSITE" id="PS00943">
    <property type="entry name" value="UBIA"/>
    <property type="match status" value="1"/>
</dbReference>
<feature type="chain" id="PRO_0000409381" description="4-hydroxybenzoate geranyltransferase 2">
    <location>
        <begin position="1"/>
        <end position="306"/>
    </location>
</feature>
<feature type="transmembrane region" description="Helical" evidence="2">
    <location>
        <begin position="38"/>
        <end position="58"/>
    </location>
</feature>
<feature type="transmembrane region" description="Helical" evidence="2">
    <location>
        <begin position="61"/>
        <end position="81"/>
    </location>
</feature>
<feature type="transmembrane region" description="Helical" evidence="2">
    <location>
        <begin position="119"/>
        <end position="139"/>
    </location>
</feature>
<feature type="transmembrane region" description="Helical" evidence="2">
    <location>
        <begin position="153"/>
        <end position="173"/>
    </location>
</feature>
<feature type="transmembrane region" description="Helical" evidence="2">
    <location>
        <begin position="178"/>
        <end position="198"/>
    </location>
</feature>
<feature type="transmembrane region" description="Helical" evidence="2">
    <location>
        <begin position="229"/>
        <end position="249"/>
    </location>
</feature>
<feature type="transmembrane region" description="Helical" evidence="2">
    <location>
        <begin position="251"/>
        <end position="271"/>
    </location>
</feature>
<feature type="transmembrane region" description="Helical" evidence="2">
    <location>
        <begin position="285"/>
        <end position="305"/>
    </location>
</feature>
<organism>
    <name type="scientific">Lithospermum erythrorhizon</name>
    <name type="common">Purple gromwell</name>
    <name type="synonym">Lithospermum officinale var. erythrorhizon</name>
    <dbReference type="NCBI Taxonomy" id="34254"/>
    <lineage>
        <taxon>Eukaryota</taxon>
        <taxon>Viridiplantae</taxon>
        <taxon>Streptophyta</taxon>
        <taxon>Embryophyta</taxon>
        <taxon>Tracheophyta</taxon>
        <taxon>Spermatophyta</taxon>
        <taxon>Magnoliopsida</taxon>
        <taxon>eudicotyledons</taxon>
        <taxon>Gunneridae</taxon>
        <taxon>Pentapetalae</taxon>
        <taxon>asterids</taxon>
        <taxon>lamiids</taxon>
        <taxon>Boraginales</taxon>
        <taxon>Boraginaceae</taxon>
        <taxon>Boraginoideae</taxon>
        <taxon>Lithospermeae</taxon>
        <taxon>Lithospermum</taxon>
    </lineage>
</organism>
<gene>
    <name type="primary">PGT-2</name>
</gene>
<accession>Q8W404</accession>
<comment type="function">
    <text evidence="3">Prenyltransferase involved in the biosynthesis of shikonin, a naphthoquinone secondary metabolite. Could accept only geranyl diphosphate and not dimethylallyl diphosphate, farnesyl diphosphate, or geranylgeranyl diphosphate as substrate.</text>
</comment>
<comment type="catalytic activity">
    <reaction evidence="3 4">
        <text>4-hydroxybenzoate + (2E)-geranyl diphosphate = 3-geranyl-4-hydroxybenzoate + diphosphate</text>
        <dbReference type="Rhea" id="RHEA:27854"/>
        <dbReference type="ChEBI" id="CHEBI:17879"/>
        <dbReference type="ChEBI" id="CHEBI:33019"/>
        <dbReference type="ChEBI" id="CHEBI:58057"/>
        <dbReference type="ChEBI" id="CHEBI:60878"/>
        <dbReference type="EC" id="2.5.1.93"/>
    </reaction>
</comment>
<comment type="cofactor">
    <cofactor evidence="4">
        <name>Mg(2+)</name>
        <dbReference type="ChEBI" id="CHEBI:18420"/>
    </cofactor>
</comment>
<comment type="biophysicochemical properties">
    <kinetics>
        <KM evidence="3">53.8 uM for 4-hydroxybenzoate</KM>
        <KM evidence="3">45.9 uM for geranyl diphosphate</KM>
    </kinetics>
</comment>
<comment type="subcellular location">
    <subcellularLocation>
        <location evidence="5">Endoplasmic reticulum membrane</location>
        <topology evidence="5">Multi-pass membrane protein</topology>
    </subcellularLocation>
</comment>
<comment type="tissue specificity">
    <text evidence="3">Expressed only in roots.</text>
</comment>
<comment type="induction">
    <text evidence="3 4">Up-regulated in the dark and by methyl jasmonate or oligogalacturonide. Down-regulated in the light and by ammonium or 2,4-dichlorophenoxyacetic acid (2,4-D).</text>
</comment>
<comment type="domain">
    <text evidence="1">The N-terminus (1-130) is determinant for the chain length specificity. Region I (76-96) and region III (201-229) are involved in the recognition of both substrates in a coordinated manner (By similarity).</text>
</comment>
<comment type="similarity">
    <text evidence="5">Belongs to the UbiA prenyltransferase family.</text>
</comment>
<sequence length="306" mass="34222">MSSKQTQLKKGKQPSWIEIYLPKEVRPYAHLARLDKPIGSWLLAWPAFWSVALIADLGSLPKMLAIFGWWAVWIRGAGCTINDYFDRDFDKKVERTKSRPLASGAVSPAKGLWWLAFQLFIGLGVLYQFNILTLALAIVHVPFVFAYPLMKRITYWPQAFLGVMISWGALLGSSALKGSVVPSIAYPLYISSFFWTLVYDTIYAHQDKVDDAKAGIKSTALRFGDATKIWITWFGIGCIGALLLGGFIVNIGLPYYVFLAIATGQLIWQIFTVDLSSPMDCGKKFVSNQWFGAIIFTGILVGRLFP</sequence>
<protein>
    <recommendedName>
        <fullName>4-hydroxybenzoate geranyltransferase 2</fullName>
        <ecNumber>2.5.1.93</ecNumber>
    </recommendedName>
    <alternativeName>
        <fullName>PHB geranyltransferase 2</fullName>
        <shortName>LePGT2</shortName>
    </alternativeName>
</protein>
<proteinExistence type="evidence at protein level"/>
<reference key="1">
    <citation type="journal article" date="2002" name="J. Biol. Chem.">
        <title>Geranyl diphosphate:4-hydroxybenzoate geranyltransferase from Lithospermum erythrorhizon. Cloning and characterization of a key enzyme in shikonin biosynthesis.</title>
        <authorList>
            <person name="Yazaki K."/>
            <person name="Kunihisa M."/>
            <person name="Fujisaki T."/>
            <person name="Sato F."/>
        </authorList>
    </citation>
    <scope>NUCLEOTIDE SEQUENCE [MRNA]</scope>
    <scope>FUNCTION</scope>
    <scope>CATALYTIC ACTIVITY</scope>
    <scope>BIOPHYSICOCHEMICAL PROPERTIES</scope>
    <scope>INDUCTION</scope>
    <scope>TISSUE SPECIFICITY</scope>
</reference>
<reference key="2">
    <citation type="journal article" date="1993" name="Phytochemistry">
        <title>Intracellular localization of p-hydroxybenzoate geranyltransferase, a key enzyme involved in shikonin biosynthesis.</title>
        <authorList>
            <person name="Yamaga Y."/>
            <person name="Nakanishi K."/>
            <person name="Fukui H."/>
            <person name="Tabata M."/>
        </authorList>
    </citation>
    <scope>SUBCELLULAR LOCATION</scope>
</reference>
<reference key="3">
    <citation type="journal article" date="1998" name="Planta">
        <title>4-Hydroxybenzoate 3-geranyltransferase from Lithospermum erythrorhizon: purification of a plant membrane-bound prenyltransferase.</title>
        <authorList>
            <person name="Muehlenweg A."/>
            <person name="Melzer M."/>
            <person name="Li S.M."/>
            <person name="Heide L."/>
        </authorList>
    </citation>
    <scope>INDUCTION BY METHYL JASMONATE</scope>
    <scope>CATALYTIC ACTIVITY</scope>
    <scope>COFACTOR</scope>
</reference>
<evidence type="ECO:0000250" key="1"/>
<evidence type="ECO:0000255" key="2"/>
<evidence type="ECO:0000269" key="3">
    <source>
    </source>
</evidence>
<evidence type="ECO:0000269" key="4">
    <source>
    </source>
</evidence>
<evidence type="ECO:0000305" key="5"/>